<name>VATD_RABIT</name>
<organism>
    <name type="scientific">Oryctolagus cuniculus</name>
    <name type="common">Rabbit</name>
    <dbReference type="NCBI Taxonomy" id="9986"/>
    <lineage>
        <taxon>Eukaryota</taxon>
        <taxon>Metazoa</taxon>
        <taxon>Chordata</taxon>
        <taxon>Craniata</taxon>
        <taxon>Vertebrata</taxon>
        <taxon>Euteleostomi</taxon>
        <taxon>Mammalia</taxon>
        <taxon>Eutheria</taxon>
        <taxon>Euarchontoglires</taxon>
        <taxon>Glires</taxon>
        <taxon>Lagomorpha</taxon>
        <taxon>Leporidae</taxon>
        <taxon>Oryctolagus</taxon>
    </lineage>
</organism>
<sequence length="247" mass="28253">MSGKDRIEIFPSRMAQTIMKARLKGAQTGRNLLKKKSDALTLRFRQILKKIIETKMLMGEVMREAAFSLAEAKFTAGDFSTTAIQNVNKAQVKIRAKKDNVAGVTLPVFEHYHEGTDSYELTGLARGGEQLAKLKRNYAKAVELLVELASLQTSFVTLDEAIKITNRRVNAIEHVIIPRIERTLAYIITELDEREREEFYRLKKIQEKKKILKEKSEKDLEQRRAAGEVMEPANLLAEEKDEDLLFE</sequence>
<accession>O97755</accession>
<reference key="1">
    <citation type="submission" date="1996-01" db="EMBL/GenBank/DDBJ databases">
        <title>The rabbit vacuolar proton-ATPase Subunit D: alternative splicing and high expression in osteoclasts.</title>
        <authorList>
            <person name="Durrin L.K."/>
            <person name="Sakai D."/>
            <person name="Minkin C."/>
        </authorList>
    </citation>
    <scope>NUCLEOTIDE SEQUENCE [MRNA]</scope>
    <source>
        <strain>New Zealand white</strain>
        <tissue>Osteoclast</tissue>
    </source>
</reference>
<dbReference type="EMBL" id="U45447">
    <property type="protein sequence ID" value="AAD10366.1"/>
    <property type="molecule type" value="mRNA"/>
</dbReference>
<dbReference type="RefSeq" id="NP_001075837.1">
    <property type="nucleotide sequence ID" value="NM_001082368.1"/>
</dbReference>
<dbReference type="SMR" id="O97755"/>
<dbReference type="FunCoup" id="O97755">
    <property type="interactions" value="1043"/>
</dbReference>
<dbReference type="STRING" id="9986.ENSOCUP00000033450"/>
<dbReference type="PaxDb" id="9986-ENSOCUP00000010335"/>
<dbReference type="GeneID" id="100009221"/>
<dbReference type="KEGG" id="ocu:100009221"/>
<dbReference type="CTD" id="51382"/>
<dbReference type="eggNOG" id="KOG1647">
    <property type="taxonomic scope" value="Eukaryota"/>
</dbReference>
<dbReference type="InParanoid" id="O97755"/>
<dbReference type="OrthoDB" id="7676488at2759"/>
<dbReference type="Proteomes" id="UP000001811">
    <property type="component" value="Unplaced"/>
</dbReference>
<dbReference type="GO" id="GO:0005813">
    <property type="term" value="C:centrosome"/>
    <property type="evidence" value="ECO:0007669"/>
    <property type="project" value="UniProtKB-SubCell"/>
</dbReference>
<dbReference type="GO" id="GO:0005929">
    <property type="term" value="C:cilium"/>
    <property type="evidence" value="ECO:0007669"/>
    <property type="project" value="UniProtKB-SubCell"/>
</dbReference>
<dbReference type="GO" id="GO:0030665">
    <property type="term" value="C:clathrin-coated vesicle membrane"/>
    <property type="evidence" value="ECO:0007669"/>
    <property type="project" value="UniProtKB-SubCell"/>
</dbReference>
<dbReference type="GO" id="GO:0000221">
    <property type="term" value="C:vacuolar proton-transporting V-type ATPase, V1 domain"/>
    <property type="evidence" value="ECO:0000250"/>
    <property type="project" value="UniProtKB"/>
</dbReference>
<dbReference type="GO" id="GO:0046961">
    <property type="term" value="F:proton-transporting ATPase activity, rotational mechanism"/>
    <property type="evidence" value="ECO:0007669"/>
    <property type="project" value="InterPro"/>
</dbReference>
<dbReference type="GO" id="GO:0060271">
    <property type="term" value="P:cilium assembly"/>
    <property type="evidence" value="ECO:0000250"/>
    <property type="project" value="UniProtKB"/>
</dbReference>
<dbReference type="GO" id="GO:0061512">
    <property type="term" value="P:protein localization to cilium"/>
    <property type="evidence" value="ECO:0000250"/>
    <property type="project" value="UniProtKB"/>
</dbReference>
<dbReference type="FunFam" id="1.10.287.3240:FF:000001">
    <property type="entry name" value="V-type proton ATPase subunit D"/>
    <property type="match status" value="1"/>
</dbReference>
<dbReference type="Gene3D" id="1.10.287.3240">
    <property type="match status" value="1"/>
</dbReference>
<dbReference type="InterPro" id="IPR002699">
    <property type="entry name" value="V_ATPase_D"/>
</dbReference>
<dbReference type="NCBIfam" id="TIGR00309">
    <property type="entry name" value="V_ATPase_subD"/>
    <property type="match status" value="1"/>
</dbReference>
<dbReference type="PANTHER" id="PTHR11671">
    <property type="entry name" value="V-TYPE ATP SYNTHASE SUBUNIT D"/>
    <property type="match status" value="1"/>
</dbReference>
<dbReference type="Pfam" id="PF01813">
    <property type="entry name" value="ATP-synt_D"/>
    <property type="match status" value="1"/>
</dbReference>
<proteinExistence type="evidence at transcript level"/>
<keyword id="KW-0966">Cell projection</keyword>
<keyword id="KW-0970">Cilium biogenesis/degradation</keyword>
<keyword id="KW-0963">Cytoplasm</keyword>
<keyword id="KW-0968">Cytoplasmic vesicle</keyword>
<keyword id="KW-0206">Cytoskeleton</keyword>
<keyword id="KW-0375">Hydrogen ion transport</keyword>
<keyword id="KW-0406">Ion transport</keyword>
<keyword id="KW-0472">Membrane</keyword>
<keyword id="KW-1185">Reference proteome</keyword>
<keyword id="KW-0813">Transport</keyword>
<feature type="chain" id="PRO_0000144234" description="V-type proton ATPase subunit D">
    <location>
        <begin position="1"/>
        <end position="247"/>
    </location>
</feature>
<protein>
    <recommendedName>
        <fullName>V-type proton ATPase subunit D</fullName>
        <shortName>V-ATPase subunit D</shortName>
    </recommendedName>
    <alternativeName>
        <fullName>V-ATPase 28 kDa accessory protein</fullName>
    </alternativeName>
    <alternativeName>
        <fullName>Vacuolar proton pump subunit D</fullName>
    </alternativeName>
</protein>
<evidence type="ECO:0000250" key="1">
    <source>
        <dbReference type="UniProtKB" id="P39942"/>
    </source>
</evidence>
<evidence type="ECO:0000250" key="2">
    <source>
        <dbReference type="UniProtKB" id="Q9Y5K8"/>
    </source>
</evidence>
<evidence type="ECO:0000305" key="3"/>
<comment type="function">
    <text evidence="1 2">Subunit of the V1 complex of vacuolar(H+)-ATPase (V-ATPase), a multisubunit enzyme composed of a peripheral complex (V1) that hydrolyzes ATP and a membrane integral complex (V0) that translocates protons (By similarity). V-ATPase is responsible for acidifying and maintaining the pH of intracellular compartments and in some cell types, is targeted to the plasma membrane, where it is responsible for acidifying the extracellular environment (By similarity). May play a role in cilium biogenesis through regulation of the transport and the localization of proteins to the cilium (By similarity).</text>
</comment>
<comment type="subunit">
    <text evidence="2">V-ATPase is a heteromultimeric enzyme made up of two complexes: the ATP-hydrolytic V1 complex and the proton translocation V0 complex (By similarity). The V1 complex consists of three catalytic AB heterodimers that form a heterohexamer, three peripheral stalks each consisting of EG heterodimers, one central rotor including subunits D and F, and the regulatory subunits C and H (By similarity). The proton translocation complex V0 consists of the proton transport subunit a, a ring of proteolipid subunits c9c'', rotary subunit d, subunits e and f, and the accessory subunits ATP6AP1/Ac45 and ATP6AP2/PRR (By similarity). Interacts with SNX10 (By similarity).</text>
</comment>
<comment type="subcellular location">
    <subcellularLocation>
        <location evidence="2">Membrane</location>
        <topology evidence="2">Peripheral membrane protein</topology>
        <orientation evidence="2">Cytoplasmic side</orientation>
    </subcellularLocation>
    <subcellularLocation>
        <location evidence="1">Cytoplasmic vesicle</location>
        <location evidence="1">Clathrin-coated vesicle membrane</location>
        <topology evidence="3">Peripheral membrane protein</topology>
    </subcellularLocation>
    <subcellularLocation>
        <location evidence="2">Cytoplasm</location>
        <location evidence="2">Cytoskeleton</location>
        <location evidence="2">Microtubule organizing center</location>
        <location evidence="2">Centrosome</location>
    </subcellularLocation>
    <subcellularLocation>
        <location evidence="2">Cell projection</location>
        <location evidence="2">Cilium</location>
    </subcellularLocation>
    <text evidence="2">Localizes to centrosome and the base of the cilium.</text>
</comment>
<comment type="similarity">
    <text evidence="3">Belongs to the V-ATPase D subunit family.</text>
</comment>
<gene>
    <name type="primary">ATP6V1D</name>
    <name type="synonym">ATP6M</name>
    <name type="synonym">VATD</name>
</gene>